<comment type="similarity">
    <text evidence="1">Belongs to the universal ribosomal protein uS2 family.</text>
</comment>
<accession>A9A428</accession>
<evidence type="ECO:0000255" key="1">
    <source>
        <dbReference type="HAMAP-Rule" id="MF_00291"/>
    </source>
</evidence>
<evidence type="ECO:0000305" key="2"/>
<gene>
    <name evidence="1" type="primary">rps2</name>
    <name type="ordered locus">Nmar_0316</name>
</gene>
<reference key="1">
    <citation type="journal article" date="2010" name="Proc. Natl. Acad. Sci. U.S.A.">
        <title>Nitrosopumilus maritimus genome reveals unique mechanisms for nitrification and autotrophy in globally distributed marine crenarchaea.</title>
        <authorList>
            <person name="Walker C.B."/>
            <person name="de la Torre J.R."/>
            <person name="Klotz M.G."/>
            <person name="Urakawa H."/>
            <person name="Pinel N."/>
            <person name="Arp D.J."/>
            <person name="Brochier-Armanet C."/>
            <person name="Chain P.S."/>
            <person name="Chan P.P."/>
            <person name="Gollabgir A."/>
            <person name="Hemp J."/>
            <person name="Hugler M."/>
            <person name="Karr E.A."/>
            <person name="Konneke M."/>
            <person name="Shin M."/>
            <person name="Lawton T.J."/>
            <person name="Lowe T."/>
            <person name="Martens-Habbena W."/>
            <person name="Sayavedra-Soto L.A."/>
            <person name="Lang D."/>
            <person name="Sievert S.M."/>
            <person name="Rosenzweig A.C."/>
            <person name="Manning G."/>
            <person name="Stahl D.A."/>
        </authorList>
    </citation>
    <scope>NUCLEOTIDE SEQUENCE [LARGE SCALE GENOMIC DNA]</scope>
    <source>
        <strain>SCM1</strain>
    </source>
</reference>
<proteinExistence type="inferred from homology"/>
<keyword id="KW-1185">Reference proteome</keyword>
<keyword id="KW-0687">Ribonucleoprotein</keyword>
<keyword id="KW-0689">Ribosomal protein</keyword>
<sequence length="207" mass="23145">MSQQAETTDIKKKILSTGIRVGTQVKTKFMRPFITKASPEGLYMLDLDITLDKIKTAAKFINRLGVENLIVCSGRQYAETPIEKFCETLGSKKLLGRFMPGTLTNPSLPYYIEPKLVLISDPQVDEQAITEATNAGIPVIGIANTDNITSNLDVIIPANNRGRKALATVYWLLVRQILIEKGELKEEDPMNIEIDDFETKITEEEIE</sequence>
<protein>
    <recommendedName>
        <fullName evidence="1">Small ribosomal subunit protein uS2</fullName>
    </recommendedName>
    <alternativeName>
        <fullName evidence="2">30S ribosomal protein S2</fullName>
    </alternativeName>
</protein>
<dbReference type="EMBL" id="CP000866">
    <property type="protein sequence ID" value="ABX12212.1"/>
    <property type="molecule type" value="Genomic_DNA"/>
</dbReference>
<dbReference type="RefSeq" id="WP_012214699.1">
    <property type="nucleotide sequence ID" value="NC_010085.1"/>
</dbReference>
<dbReference type="SMR" id="A9A428"/>
<dbReference type="FunCoup" id="A9A428">
    <property type="interactions" value="135"/>
</dbReference>
<dbReference type="STRING" id="436308.Nmar_0316"/>
<dbReference type="EnsemblBacteria" id="ABX12212">
    <property type="protein sequence ID" value="ABX12212"/>
    <property type="gene ID" value="Nmar_0316"/>
</dbReference>
<dbReference type="GeneID" id="5774581"/>
<dbReference type="KEGG" id="nmr:Nmar_0316"/>
<dbReference type="eggNOG" id="arCOG04245">
    <property type="taxonomic scope" value="Archaea"/>
</dbReference>
<dbReference type="HOGENOM" id="CLU_058171_3_0_2"/>
<dbReference type="InParanoid" id="A9A428"/>
<dbReference type="OrthoDB" id="371797at2157"/>
<dbReference type="PhylomeDB" id="A9A428"/>
<dbReference type="Proteomes" id="UP000000792">
    <property type="component" value="Chromosome"/>
</dbReference>
<dbReference type="GO" id="GO:0022627">
    <property type="term" value="C:cytosolic small ribosomal subunit"/>
    <property type="evidence" value="ECO:0000318"/>
    <property type="project" value="GO_Central"/>
</dbReference>
<dbReference type="GO" id="GO:0003735">
    <property type="term" value="F:structural constituent of ribosome"/>
    <property type="evidence" value="ECO:0000318"/>
    <property type="project" value="GO_Central"/>
</dbReference>
<dbReference type="GO" id="GO:0000028">
    <property type="term" value="P:ribosomal small subunit assembly"/>
    <property type="evidence" value="ECO:0000318"/>
    <property type="project" value="GO_Central"/>
</dbReference>
<dbReference type="GO" id="GO:0006412">
    <property type="term" value="P:translation"/>
    <property type="evidence" value="ECO:0000318"/>
    <property type="project" value="GO_Central"/>
</dbReference>
<dbReference type="CDD" id="cd01425">
    <property type="entry name" value="RPS2"/>
    <property type="match status" value="1"/>
</dbReference>
<dbReference type="FunFam" id="3.40.50.10490:FF:000030">
    <property type="entry name" value="30S ribosomal protein S2"/>
    <property type="match status" value="1"/>
</dbReference>
<dbReference type="Gene3D" id="3.40.50.10490">
    <property type="entry name" value="Glucose-6-phosphate isomerase like protein, domain 1"/>
    <property type="match status" value="1"/>
</dbReference>
<dbReference type="HAMAP" id="MF_00291_A">
    <property type="entry name" value="Ribosomal_uS2_A"/>
    <property type="match status" value="1"/>
</dbReference>
<dbReference type="InterPro" id="IPR001865">
    <property type="entry name" value="Ribosomal_uS2"/>
</dbReference>
<dbReference type="InterPro" id="IPR023454">
    <property type="entry name" value="Ribosomal_uS2_arc"/>
</dbReference>
<dbReference type="InterPro" id="IPR018130">
    <property type="entry name" value="Ribosomal_uS2_CS"/>
</dbReference>
<dbReference type="InterPro" id="IPR005707">
    <property type="entry name" value="Ribosomal_uS2_euk/arc"/>
</dbReference>
<dbReference type="InterPro" id="IPR023591">
    <property type="entry name" value="Ribosomal_uS2_flav_dom_sf"/>
</dbReference>
<dbReference type="NCBIfam" id="TIGR01012">
    <property type="entry name" value="uS2_euk_arch"/>
    <property type="match status" value="1"/>
</dbReference>
<dbReference type="PANTHER" id="PTHR11489">
    <property type="entry name" value="40S RIBOSOMAL PROTEIN SA"/>
    <property type="match status" value="1"/>
</dbReference>
<dbReference type="Pfam" id="PF00318">
    <property type="entry name" value="Ribosomal_S2"/>
    <property type="match status" value="2"/>
</dbReference>
<dbReference type="PRINTS" id="PR00395">
    <property type="entry name" value="RIBOSOMALS2"/>
</dbReference>
<dbReference type="SUPFAM" id="SSF52313">
    <property type="entry name" value="Ribosomal protein S2"/>
    <property type="match status" value="1"/>
</dbReference>
<dbReference type="PROSITE" id="PS00963">
    <property type="entry name" value="RIBOSOMAL_S2_2"/>
    <property type="match status" value="1"/>
</dbReference>
<feature type="chain" id="PRO_0000352076" description="Small ribosomal subunit protein uS2">
    <location>
        <begin position="1"/>
        <end position="207"/>
    </location>
</feature>
<organism>
    <name type="scientific">Nitrosopumilus maritimus (strain SCM1)</name>
    <dbReference type="NCBI Taxonomy" id="436308"/>
    <lineage>
        <taxon>Archaea</taxon>
        <taxon>Nitrososphaerota</taxon>
        <taxon>Nitrososphaeria</taxon>
        <taxon>Nitrosopumilales</taxon>
        <taxon>Nitrosopumilaceae</taxon>
        <taxon>Nitrosopumilus</taxon>
    </lineage>
</organism>
<name>RS2_NITMS</name>